<accession>B8IUB4</accession>
<name>RF1_METNO</name>
<sequence>MIAIPSDRLDAILARHDIVTATLSAGEADSESFVQLSRELSDLDDVVAAIRAYRAADAELRGVEAMLEEGDPEMRALAAEEKPEVEAARDAAAKALQILLLPKDSADEKSAILEIRAGTGGDEAALFAGDLFRMYARYADLKGWKVEVVSESPGTMGGYREVVAEVKGRGVFARLKFESGAHRVQRVPETETQGRIHTSAATVAVLPEAEEVDIHVNEADLKIDTMRAQGAGGQHVNKTESAIRITHMPSGIVVFVQEERSQHKNRARAMAVLRARLYEQERSQKDAARAADRRAQVGSGDRSERIRTYNFPQGRVTDHRINLTLYKLEEVLAGTALDELVDALVTEHQAALLAAEGLG</sequence>
<comment type="function">
    <text evidence="1">Peptide chain release factor 1 directs the termination of translation in response to the peptide chain termination codons UAG and UAA.</text>
</comment>
<comment type="subcellular location">
    <subcellularLocation>
        <location evidence="1">Cytoplasm</location>
    </subcellularLocation>
</comment>
<comment type="PTM">
    <text evidence="1">Methylated by PrmC. Methylation increases the termination efficiency of RF1.</text>
</comment>
<comment type="similarity">
    <text evidence="1">Belongs to the prokaryotic/mitochondrial release factor family.</text>
</comment>
<proteinExistence type="inferred from homology"/>
<feature type="chain" id="PRO_1000193496" description="Peptide chain release factor 1">
    <location>
        <begin position="1"/>
        <end position="359"/>
    </location>
</feature>
<feature type="region of interest" description="Disordered" evidence="2">
    <location>
        <begin position="283"/>
        <end position="305"/>
    </location>
</feature>
<feature type="modified residue" description="N5-methylglutamine" evidence="1">
    <location>
        <position position="234"/>
    </location>
</feature>
<reference key="1">
    <citation type="submission" date="2009-01" db="EMBL/GenBank/DDBJ databases">
        <title>Complete sequence of chromosome of Methylobacterium nodulans ORS 2060.</title>
        <authorList>
            <consortium name="US DOE Joint Genome Institute"/>
            <person name="Lucas S."/>
            <person name="Copeland A."/>
            <person name="Lapidus A."/>
            <person name="Glavina del Rio T."/>
            <person name="Dalin E."/>
            <person name="Tice H."/>
            <person name="Bruce D."/>
            <person name="Goodwin L."/>
            <person name="Pitluck S."/>
            <person name="Sims D."/>
            <person name="Brettin T."/>
            <person name="Detter J.C."/>
            <person name="Han C."/>
            <person name="Larimer F."/>
            <person name="Land M."/>
            <person name="Hauser L."/>
            <person name="Kyrpides N."/>
            <person name="Ivanova N."/>
            <person name="Marx C.J."/>
            <person name="Richardson P."/>
        </authorList>
    </citation>
    <scope>NUCLEOTIDE SEQUENCE [LARGE SCALE GENOMIC DNA]</scope>
    <source>
        <strain>LMG 21967 / CNCM I-2342 / ORS 2060</strain>
    </source>
</reference>
<organism>
    <name type="scientific">Methylobacterium nodulans (strain LMG 21967 / CNCM I-2342 / ORS 2060)</name>
    <dbReference type="NCBI Taxonomy" id="460265"/>
    <lineage>
        <taxon>Bacteria</taxon>
        <taxon>Pseudomonadati</taxon>
        <taxon>Pseudomonadota</taxon>
        <taxon>Alphaproteobacteria</taxon>
        <taxon>Hyphomicrobiales</taxon>
        <taxon>Methylobacteriaceae</taxon>
        <taxon>Methylobacterium</taxon>
    </lineage>
</organism>
<gene>
    <name evidence="1" type="primary">prfA</name>
    <name type="ordered locus">Mnod_0112</name>
</gene>
<keyword id="KW-0963">Cytoplasm</keyword>
<keyword id="KW-0488">Methylation</keyword>
<keyword id="KW-0648">Protein biosynthesis</keyword>
<keyword id="KW-1185">Reference proteome</keyword>
<dbReference type="EMBL" id="CP001349">
    <property type="protein sequence ID" value="ACL55159.1"/>
    <property type="molecule type" value="Genomic_DNA"/>
</dbReference>
<dbReference type="RefSeq" id="WP_012634398.1">
    <property type="nucleotide sequence ID" value="NC_011894.1"/>
</dbReference>
<dbReference type="SMR" id="B8IUB4"/>
<dbReference type="STRING" id="460265.Mnod_0112"/>
<dbReference type="KEGG" id="mno:Mnod_0112"/>
<dbReference type="eggNOG" id="COG0216">
    <property type="taxonomic scope" value="Bacteria"/>
</dbReference>
<dbReference type="HOGENOM" id="CLU_036856_0_1_5"/>
<dbReference type="OrthoDB" id="9806673at2"/>
<dbReference type="Proteomes" id="UP000008207">
    <property type="component" value="Chromosome"/>
</dbReference>
<dbReference type="GO" id="GO:0005737">
    <property type="term" value="C:cytoplasm"/>
    <property type="evidence" value="ECO:0007669"/>
    <property type="project" value="UniProtKB-SubCell"/>
</dbReference>
<dbReference type="GO" id="GO:0016149">
    <property type="term" value="F:translation release factor activity, codon specific"/>
    <property type="evidence" value="ECO:0007669"/>
    <property type="project" value="UniProtKB-UniRule"/>
</dbReference>
<dbReference type="FunFam" id="3.30.160.20:FF:000004">
    <property type="entry name" value="Peptide chain release factor 1"/>
    <property type="match status" value="1"/>
</dbReference>
<dbReference type="FunFam" id="3.30.70.1660:FF:000002">
    <property type="entry name" value="Peptide chain release factor 1"/>
    <property type="match status" value="1"/>
</dbReference>
<dbReference type="FunFam" id="3.30.70.1660:FF:000004">
    <property type="entry name" value="Peptide chain release factor 1"/>
    <property type="match status" value="1"/>
</dbReference>
<dbReference type="Gene3D" id="3.30.160.20">
    <property type="match status" value="1"/>
</dbReference>
<dbReference type="Gene3D" id="3.30.70.1660">
    <property type="match status" value="1"/>
</dbReference>
<dbReference type="Gene3D" id="6.10.140.1950">
    <property type="match status" value="1"/>
</dbReference>
<dbReference type="HAMAP" id="MF_00093">
    <property type="entry name" value="Rel_fac_1"/>
    <property type="match status" value="1"/>
</dbReference>
<dbReference type="InterPro" id="IPR005139">
    <property type="entry name" value="PCRF"/>
</dbReference>
<dbReference type="InterPro" id="IPR000352">
    <property type="entry name" value="Pep_chain_release_fac_I"/>
</dbReference>
<dbReference type="InterPro" id="IPR045853">
    <property type="entry name" value="Pep_chain_release_fac_I_sf"/>
</dbReference>
<dbReference type="InterPro" id="IPR050057">
    <property type="entry name" value="Prokaryotic/Mito_RF"/>
</dbReference>
<dbReference type="InterPro" id="IPR004373">
    <property type="entry name" value="RF-1"/>
</dbReference>
<dbReference type="NCBIfam" id="TIGR00019">
    <property type="entry name" value="prfA"/>
    <property type="match status" value="1"/>
</dbReference>
<dbReference type="NCBIfam" id="NF001859">
    <property type="entry name" value="PRK00591.1"/>
    <property type="match status" value="1"/>
</dbReference>
<dbReference type="PANTHER" id="PTHR43804">
    <property type="entry name" value="LD18447P"/>
    <property type="match status" value="1"/>
</dbReference>
<dbReference type="PANTHER" id="PTHR43804:SF7">
    <property type="entry name" value="LD18447P"/>
    <property type="match status" value="1"/>
</dbReference>
<dbReference type="Pfam" id="PF03462">
    <property type="entry name" value="PCRF"/>
    <property type="match status" value="1"/>
</dbReference>
<dbReference type="Pfam" id="PF00472">
    <property type="entry name" value="RF-1"/>
    <property type="match status" value="1"/>
</dbReference>
<dbReference type="SMART" id="SM00937">
    <property type="entry name" value="PCRF"/>
    <property type="match status" value="1"/>
</dbReference>
<dbReference type="SUPFAM" id="SSF75620">
    <property type="entry name" value="Release factor"/>
    <property type="match status" value="1"/>
</dbReference>
<dbReference type="PROSITE" id="PS00745">
    <property type="entry name" value="RF_PROK_I"/>
    <property type="match status" value="1"/>
</dbReference>
<evidence type="ECO:0000255" key="1">
    <source>
        <dbReference type="HAMAP-Rule" id="MF_00093"/>
    </source>
</evidence>
<evidence type="ECO:0000256" key="2">
    <source>
        <dbReference type="SAM" id="MobiDB-lite"/>
    </source>
</evidence>
<protein>
    <recommendedName>
        <fullName evidence="1">Peptide chain release factor 1</fullName>
        <shortName evidence="1">RF-1</shortName>
    </recommendedName>
</protein>